<accession>A6UEI3</accession>
<feature type="chain" id="PRO_0000389845" description="Acetyl-coenzyme A carboxylase carboxyl transferase subunit beta">
    <location>
        <begin position="1"/>
        <end position="304"/>
    </location>
</feature>
<feature type="domain" description="CoA carboxyltransferase N-terminal" evidence="2">
    <location>
        <begin position="25"/>
        <end position="294"/>
    </location>
</feature>
<comment type="function">
    <text evidence="1">Component of the acetyl coenzyme A carboxylase (ACC) complex. Biotin carboxylase (BC) catalyzes the carboxylation of biotin on its carrier protein (BCCP) and then the CO(2) group is transferred by the transcarboxylase to acetyl-CoA to form malonyl-CoA.</text>
</comment>
<comment type="catalytic activity">
    <reaction evidence="1">
        <text>N(6)-carboxybiotinyl-L-lysyl-[protein] + acetyl-CoA = N(6)-biotinyl-L-lysyl-[protein] + malonyl-CoA</text>
        <dbReference type="Rhea" id="RHEA:54728"/>
        <dbReference type="Rhea" id="RHEA-COMP:10505"/>
        <dbReference type="Rhea" id="RHEA-COMP:10506"/>
        <dbReference type="ChEBI" id="CHEBI:57288"/>
        <dbReference type="ChEBI" id="CHEBI:57384"/>
        <dbReference type="ChEBI" id="CHEBI:83144"/>
        <dbReference type="ChEBI" id="CHEBI:83145"/>
        <dbReference type="EC" id="2.1.3.15"/>
    </reaction>
</comment>
<comment type="pathway">
    <text evidence="1">Lipid metabolism; malonyl-CoA biosynthesis; malonyl-CoA from acetyl-CoA: step 1/1.</text>
</comment>
<comment type="subunit">
    <text evidence="1">Acetyl-CoA carboxylase is a heterohexamer composed of biotin carboxyl carrier protein (AccB), biotin carboxylase (AccC) and two subunits each of ACCase subunit alpha (AccA) and ACCase subunit beta (AccD).</text>
</comment>
<comment type="subcellular location">
    <subcellularLocation>
        <location evidence="1">Cytoplasm</location>
    </subcellularLocation>
</comment>
<comment type="similarity">
    <text evidence="1">Belongs to the AccD/PCCB family.</text>
</comment>
<gene>
    <name evidence="1" type="primary">accD</name>
    <name type="ordered locus">Smed_3239</name>
</gene>
<organism>
    <name type="scientific">Sinorhizobium medicae (strain WSM419)</name>
    <name type="common">Ensifer medicae</name>
    <dbReference type="NCBI Taxonomy" id="366394"/>
    <lineage>
        <taxon>Bacteria</taxon>
        <taxon>Pseudomonadati</taxon>
        <taxon>Pseudomonadota</taxon>
        <taxon>Alphaproteobacteria</taxon>
        <taxon>Hyphomicrobiales</taxon>
        <taxon>Rhizobiaceae</taxon>
        <taxon>Sinorhizobium/Ensifer group</taxon>
        <taxon>Sinorhizobium</taxon>
    </lineage>
</organism>
<protein>
    <recommendedName>
        <fullName evidence="1">Acetyl-coenzyme A carboxylase carboxyl transferase subunit beta</fullName>
        <shortName evidence="1">ACCase subunit beta</shortName>
        <shortName evidence="1">Acetyl-CoA carboxylase carboxyltransferase subunit beta</shortName>
        <ecNumber evidence="1">2.1.3.15</ecNumber>
    </recommendedName>
</protein>
<sequence length="304" mass="33583">MNWITNYVRPKINSMLGRREVPENLWIKCPETGEMVFHRDLEENKWVIPQSGFHMKMPAKARLKDLFDGGIYEAFPQPKVAQDPLKFRDSKKYSDRLRDSRTKTELEDTIVAGLGQVQGIKLVAVAHEFNFIGGSLGIAAGEAIVKAFERAIAEKCPLVMFPASGGARMQEGILSLMQLPRTTVAVNMLKEAGLPYIVVLTNPTTGGVTASYAMLGDVHLAEPGAEIGFAGKRVIEQTLREKLPEGFQTSEYLMEHGMVDMVVKRHDIPETLARVLNILMKKPAKAIKRDTATELAPLPVAASA</sequence>
<reference key="1">
    <citation type="submission" date="2007-06" db="EMBL/GenBank/DDBJ databases">
        <title>Complete sequence of Sinorhizobium medicae WSM419 chromosome.</title>
        <authorList>
            <consortium name="US DOE Joint Genome Institute"/>
            <person name="Copeland A."/>
            <person name="Lucas S."/>
            <person name="Lapidus A."/>
            <person name="Barry K."/>
            <person name="Glavina del Rio T."/>
            <person name="Dalin E."/>
            <person name="Tice H."/>
            <person name="Pitluck S."/>
            <person name="Chain P."/>
            <person name="Malfatti S."/>
            <person name="Shin M."/>
            <person name="Vergez L."/>
            <person name="Schmutz J."/>
            <person name="Larimer F."/>
            <person name="Land M."/>
            <person name="Hauser L."/>
            <person name="Kyrpides N."/>
            <person name="Mikhailova N."/>
            <person name="Reeve W.G."/>
            <person name="Richardson P."/>
        </authorList>
    </citation>
    <scope>NUCLEOTIDE SEQUENCE [LARGE SCALE GENOMIC DNA]</scope>
    <source>
        <strain>WSM419</strain>
    </source>
</reference>
<proteinExistence type="inferred from homology"/>
<name>ACCD_SINMW</name>
<evidence type="ECO:0000255" key="1">
    <source>
        <dbReference type="HAMAP-Rule" id="MF_01395"/>
    </source>
</evidence>
<evidence type="ECO:0000255" key="2">
    <source>
        <dbReference type="PROSITE-ProRule" id="PRU01136"/>
    </source>
</evidence>
<dbReference type="EC" id="2.1.3.15" evidence="1"/>
<dbReference type="EMBL" id="CP000738">
    <property type="protein sequence ID" value="ABR62063.1"/>
    <property type="molecule type" value="Genomic_DNA"/>
</dbReference>
<dbReference type="RefSeq" id="WP_012067444.1">
    <property type="nucleotide sequence ID" value="NC_009636.1"/>
</dbReference>
<dbReference type="RefSeq" id="YP_001328898.1">
    <property type="nucleotide sequence ID" value="NC_009636.1"/>
</dbReference>
<dbReference type="SMR" id="A6UEI3"/>
<dbReference type="STRING" id="366394.Smed_3239"/>
<dbReference type="GeneID" id="61610821"/>
<dbReference type="KEGG" id="smd:Smed_3239"/>
<dbReference type="PATRIC" id="fig|366394.8.peg.6477"/>
<dbReference type="eggNOG" id="COG0777">
    <property type="taxonomic scope" value="Bacteria"/>
</dbReference>
<dbReference type="HOGENOM" id="CLU_015486_1_0_5"/>
<dbReference type="OrthoDB" id="9772975at2"/>
<dbReference type="UniPathway" id="UPA00655">
    <property type="reaction ID" value="UER00711"/>
</dbReference>
<dbReference type="Proteomes" id="UP000001108">
    <property type="component" value="Chromosome"/>
</dbReference>
<dbReference type="GO" id="GO:0009329">
    <property type="term" value="C:acetate CoA-transferase complex"/>
    <property type="evidence" value="ECO:0007669"/>
    <property type="project" value="TreeGrafter"/>
</dbReference>
<dbReference type="GO" id="GO:0003989">
    <property type="term" value="F:acetyl-CoA carboxylase activity"/>
    <property type="evidence" value="ECO:0007669"/>
    <property type="project" value="InterPro"/>
</dbReference>
<dbReference type="GO" id="GO:0005524">
    <property type="term" value="F:ATP binding"/>
    <property type="evidence" value="ECO:0007669"/>
    <property type="project" value="UniProtKB-KW"/>
</dbReference>
<dbReference type="GO" id="GO:0016743">
    <property type="term" value="F:carboxyl- or carbamoyltransferase activity"/>
    <property type="evidence" value="ECO:0007669"/>
    <property type="project" value="UniProtKB-UniRule"/>
</dbReference>
<dbReference type="GO" id="GO:0006633">
    <property type="term" value="P:fatty acid biosynthetic process"/>
    <property type="evidence" value="ECO:0007669"/>
    <property type="project" value="UniProtKB-KW"/>
</dbReference>
<dbReference type="GO" id="GO:2001295">
    <property type="term" value="P:malonyl-CoA biosynthetic process"/>
    <property type="evidence" value="ECO:0007669"/>
    <property type="project" value="UniProtKB-UniRule"/>
</dbReference>
<dbReference type="Gene3D" id="3.90.226.10">
    <property type="entry name" value="2-enoyl-CoA Hydratase, Chain A, domain 1"/>
    <property type="match status" value="1"/>
</dbReference>
<dbReference type="HAMAP" id="MF_01395">
    <property type="entry name" value="AcetylCoA_CT_beta"/>
    <property type="match status" value="1"/>
</dbReference>
<dbReference type="InterPro" id="IPR034733">
    <property type="entry name" value="AcCoA_carboxyl_beta"/>
</dbReference>
<dbReference type="InterPro" id="IPR000438">
    <property type="entry name" value="Acetyl_CoA_COase_Trfase_b_su"/>
</dbReference>
<dbReference type="InterPro" id="IPR029045">
    <property type="entry name" value="ClpP/crotonase-like_dom_sf"/>
</dbReference>
<dbReference type="InterPro" id="IPR011762">
    <property type="entry name" value="COA_CT_N"/>
</dbReference>
<dbReference type="NCBIfam" id="TIGR00515">
    <property type="entry name" value="accD"/>
    <property type="match status" value="1"/>
</dbReference>
<dbReference type="PANTHER" id="PTHR42995">
    <property type="entry name" value="ACETYL-COENZYME A CARBOXYLASE CARBOXYL TRANSFERASE SUBUNIT BETA, CHLOROPLASTIC"/>
    <property type="match status" value="1"/>
</dbReference>
<dbReference type="PANTHER" id="PTHR42995:SF5">
    <property type="entry name" value="ACETYL-COENZYME A CARBOXYLASE CARBOXYL TRANSFERASE SUBUNIT BETA, CHLOROPLASTIC"/>
    <property type="match status" value="1"/>
</dbReference>
<dbReference type="Pfam" id="PF01039">
    <property type="entry name" value="Carboxyl_trans"/>
    <property type="match status" value="1"/>
</dbReference>
<dbReference type="PRINTS" id="PR01070">
    <property type="entry name" value="ACCCTRFRASEB"/>
</dbReference>
<dbReference type="SUPFAM" id="SSF52096">
    <property type="entry name" value="ClpP/crotonase"/>
    <property type="match status" value="1"/>
</dbReference>
<dbReference type="PROSITE" id="PS50980">
    <property type="entry name" value="COA_CT_NTER"/>
    <property type="match status" value="1"/>
</dbReference>
<keyword id="KW-0067">ATP-binding</keyword>
<keyword id="KW-0963">Cytoplasm</keyword>
<keyword id="KW-0275">Fatty acid biosynthesis</keyword>
<keyword id="KW-0276">Fatty acid metabolism</keyword>
<keyword id="KW-0444">Lipid biosynthesis</keyword>
<keyword id="KW-0443">Lipid metabolism</keyword>
<keyword id="KW-0547">Nucleotide-binding</keyword>
<keyword id="KW-0808">Transferase</keyword>